<accession>A4ILY5</accession>
<protein>
    <recommendedName>
        <fullName evidence="1">UPF0298 protein GTNG_0961</fullName>
    </recommendedName>
</protein>
<organism>
    <name type="scientific">Geobacillus thermodenitrificans (strain NG80-2)</name>
    <dbReference type="NCBI Taxonomy" id="420246"/>
    <lineage>
        <taxon>Bacteria</taxon>
        <taxon>Bacillati</taxon>
        <taxon>Bacillota</taxon>
        <taxon>Bacilli</taxon>
        <taxon>Bacillales</taxon>
        <taxon>Anoxybacillaceae</taxon>
        <taxon>Geobacillus</taxon>
    </lineage>
</organism>
<gene>
    <name type="ordered locus">GTNG_0961</name>
</gene>
<evidence type="ECO:0000255" key="1">
    <source>
        <dbReference type="HAMAP-Rule" id="MF_01126"/>
    </source>
</evidence>
<sequence length="89" mass="10617">MFPKRQGIIVWLHSLKYGKQLRKFGNIHYISKRLKYAVLYCDMEQVDHVMKKLAALPFVKRVEPSYRPFLRLEFESKGEKEKDSPYPLG</sequence>
<dbReference type="EMBL" id="CP000557">
    <property type="protein sequence ID" value="ABO66339.1"/>
    <property type="molecule type" value="Genomic_DNA"/>
</dbReference>
<dbReference type="RefSeq" id="WP_008878711.1">
    <property type="nucleotide sequence ID" value="NC_009328.1"/>
</dbReference>
<dbReference type="SMR" id="A4ILY5"/>
<dbReference type="KEGG" id="gtn:GTNG_0961"/>
<dbReference type="eggNOG" id="COG4471">
    <property type="taxonomic scope" value="Bacteria"/>
</dbReference>
<dbReference type="HOGENOM" id="CLU_159890_2_0_9"/>
<dbReference type="Proteomes" id="UP000001578">
    <property type="component" value="Chromosome"/>
</dbReference>
<dbReference type="GO" id="GO:0005737">
    <property type="term" value="C:cytoplasm"/>
    <property type="evidence" value="ECO:0007669"/>
    <property type="project" value="UniProtKB-SubCell"/>
</dbReference>
<dbReference type="HAMAP" id="MF_01126">
    <property type="entry name" value="UPF0298"/>
    <property type="match status" value="1"/>
</dbReference>
<dbReference type="InterPro" id="IPR016979">
    <property type="entry name" value="DUF2129"/>
</dbReference>
<dbReference type="NCBIfam" id="NF002777">
    <property type="entry name" value="PRK02886.1"/>
    <property type="match status" value="1"/>
</dbReference>
<dbReference type="Pfam" id="PF09902">
    <property type="entry name" value="DUF2129"/>
    <property type="match status" value="1"/>
</dbReference>
<dbReference type="PIRSF" id="PIRSF031653">
    <property type="entry name" value="UCP031653"/>
    <property type="match status" value="1"/>
</dbReference>
<comment type="subcellular location">
    <subcellularLocation>
        <location evidence="1">Cytoplasm</location>
    </subcellularLocation>
</comment>
<comment type="similarity">
    <text evidence="1">Belongs to the UPF0298 family.</text>
</comment>
<feature type="chain" id="PRO_1000065358" description="UPF0298 protein GTNG_0961">
    <location>
        <begin position="1"/>
        <end position="89"/>
    </location>
</feature>
<keyword id="KW-0963">Cytoplasm</keyword>
<name>Y961_GEOTN</name>
<reference key="1">
    <citation type="journal article" date="2007" name="Proc. Natl. Acad. Sci. U.S.A.">
        <title>Genome and proteome of long-chain alkane degrading Geobacillus thermodenitrificans NG80-2 isolated from a deep-subsurface oil reservoir.</title>
        <authorList>
            <person name="Feng L."/>
            <person name="Wang W."/>
            <person name="Cheng J."/>
            <person name="Ren Y."/>
            <person name="Zhao G."/>
            <person name="Gao C."/>
            <person name="Tang Y."/>
            <person name="Liu X."/>
            <person name="Han W."/>
            <person name="Peng X."/>
            <person name="Liu R."/>
            <person name="Wang L."/>
        </authorList>
    </citation>
    <scope>NUCLEOTIDE SEQUENCE [LARGE SCALE GENOMIC DNA]</scope>
    <source>
        <strain>NG80-2</strain>
    </source>
</reference>
<proteinExistence type="inferred from homology"/>